<feature type="chain" id="PRO_0000303340" description="tRNA N6-adenosine threonylcarbamoyltransferase">
    <location>
        <begin position="1"/>
        <end position="339"/>
    </location>
</feature>
<feature type="binding site" evidence="1">
    <location>
        <position position="112"/>
    </location>
    <ligand>
        <name>Fe cation</name>
        <dbReference type="ChEBI" id="CHEBI:24875"/>
    </ligand>
</feature>
<feature type="binding site" evidence="1">
    <location>
        <position position="116"/>
    </location>
    <ligand>
        <name>Fe cation</name>
        <dbReference type="ChEBI" id="CHEBI:24875"/>
    </ligand>
</feature>
<feature type="binding site" evidence="1">
    <location>
        <begin position="135"/>
        <end position="139"/>
    </location>
    <ligand>
        <name>substrate</name>
    </ligand>
</feature>
<feature type="binding site" evidence="1">
    <location>
        <position position="168"/>
    </location>
    <ligand>
        <name>substrate</name>
    </ligand>
</feature>
<feature type="binding site" evidence="1">
    <location>
        <position position="181"/>
    </location>
    <ligand>
        <name>substrate</name>
    </ligand>
</feature>
<feature type="binding site" evidence="1">
    <location>
        <position position="273"/>
    </location>
    <ligand>
        <name>substrate</name>
    </ligand>
</feature>
<feature type="binding site" evidence="1">
    <location>
        <position position="301"/>
    </location>
    <ligand>
        <name>Fe cation</name>
        <dbReference type="ChEBI" id="CHEBI:24875"/>
    </ligand>
</feature>
<proteinExistence type="inferred from homology"/>
<protein>
    <recommendedName>
        <fullName evidence="1">tRNA N6-adenosine threonylcarbamoyltransferase</fullName>
        <ecNumber evidence="1">2.3.1.234</ecNumber>
    </recommendedName>
    <alternativeName>
        <fullName evidence="1">N6-L-threonylcarbamoyladenine synthase</fullName>
        <shortName evidence="1">t(6)A synthase</shortName>
    </alternativeName>
    <alternativeName>
        <fullName evidence="1">t(6)A37 threonylcarbamoyladenosine biosynthesis protein TsaD</fullName>
    </alternativeName>
    <alternativeName>
        <fullName evidence="1">tRNA threonylcarbamoyladenosine biosynthesis protein TsaD</fullName>
    </alternativeName>
</protein>
<reference key="1">
    <citation type="journal article" date="2003" name="Proc. Natl. Acad. Sci. U.S.A.">
        <title>Complete genome sequence of the Q-fever pathogen, Coxiella burnetii.</title>
        <authorList>
            <person name="Seshadri R."/>
            <person name="Paulsen I.T."/>
            <person name="Eisen J.A."/>
            <person name="Read T.D."/>
            <person name="Nelson K.E."/>
            <person name="Nelson W.C."/>
            <person name="Ward N.L."/>
            <person name="Tettelin H."/>
            <person name="Davidsen T.M."/>
            <person name="Beanan M.J."/>
            <person name="DeBoy R.T."/>
            <person name="Daugherty S.C."/>
            <person name="Brinkac L.M."/>
            <person name="Madupu R."/>
            <person name="Dodson R.J."/>
            <person name="Khouri H.M."/>
            <person name="Lee K.H."/>
            <person name="Carty H.A."/>
            <person name="Scanlan D."/>
            <person name="Heinzen R.A."/>
            <person name="Thompson H.A."/>
            <person name="Samuel J.E."/>
            <person name="Fraser C.M."/>
            <person name="Heidelberg J.F."/>
        </authorList>
    </citation>
    <scope>NUCLEOTIDE SEQUENCE [LARGE SCALE GENOMIC DNA]</scope>
    <source>
        <strain>RSA 493 / Nine Mile phase I</strain>
    </source>
</reference>
<accession>Q83C88</accession>
<comment type="function">
    <text evidence="1">Required for the formation of a threonylcarbamoyl group on adenosine at position 37 (t(6)A37) in tRNAs that read codons beginning with adenine. Is involved in the transfer of the threonylcarbamoyl moiety of threonylcarbamoyl-AMP (TC-AMP) to the N6 group of A37, together with TsaE and TsaB. TsaD likely plays a direct catalytic role in this reaction.</text>
</comment>
<comment type="catalytic activity">
    <reaction evidence="1">
        <text>L-threonylcarbamoyladenylate + adenosine(37) in tRNA = N(6)-L-threonylcarbamoyladenosine(37) in tRNA + AMP + H(+)</text>
        <dbReference type="Rhea" id="RHEA:37059"/>
        <dbReference type="Rhea" id="RHEA-COMP:10162"/>
        <dbReference type="Rhea" id="RHEA-COMP:10163"/>
        <dbReference type="ChEBI" id="CHEBI:15378"/>
        <dbReference type="ChEBI" id="CHEBI:73682"/>
        <dbReference type="ChEBI" id="CHEBI:74411"/>
        <dbReference type="ChEBI" id="CHEBI:74418"/>
        <dbReference type="ChEBI" id="CHEBI:456215"/>
        <dbReference type="EC" id="2.3.1.234"/>
    </reaction>
</comment>
<comment type="cofactor">
    <cofactor evidence="1">
        <name>Fe(2+)</name>
        <dbReference type="ChEBI" id="CHEBI:29033"/>
    </cofactor>
    <text evidence="1">Binds 1 Fe(2+) ion per subunit.</text>
</comment>
<comment type="subcellular location">
    <subcellularLocation>
        <location evidence="1">Cytoplasm</location>
    </subcellularLocation>
</comment>
<comment type="similarity">
    <text evidence="1">Belongs to the KAE1 / TsaD family.</text>
</comment>
<sequence>MKCVLGVETSCDETAVALYDGERGLLAHRVYSQIAIHAEYGGVVPELASRDHIRKILPLIKAALDDAALSKENIDGIAYTKGPGLIGALMVGASVAKSLAYAWRVPVVGVHHMEAHLMALQLEESRPAYPFIALLVSGGHTMLVHVEQPGRYKILGESVDDAAGEAFDKTAKLLGLPYPGGPALARLAEQGEPKRFIFPRPMVNQPHLNFSFSGLKTHAVNCFKQYGGEEQTRADIACAFENAVVDTLIIKCLRALEKTGINTLVLVGGVAANKKLRERLGQVAVKRAAQIYYPRQEFCTDNGAMVAYTGWLRLNAGEKEDKIIRVKPRWSMAELNIIN</sequence>
<dbReference type="EC" id="2.3.1.234" evidence="1"/>
<dbReference type="EMBL" id="AE016828">
    <property type="protein sequence ID" value="AAO90749.1"/>
    <property type="molecule type" value="Genomic_DNA"/>
</dbReference>
<dbReference type="RefSeq" id="NP_820235.1">
    <property type="nucleotide sequence ID" value="NC_002971.3"/>
</dbReference>
<dbReference type="RefSeq" id="WP_010958097.1">
    <property type="nucleotide sequence ID" value="NC_002971.4"/>
</dbReference>
<dbReference type="SMR" id="Q83C88"/>
<dbReference type="STRING" id="227377.CBU_1240"/>
<dbReference type="EnsemblBacteria" id="AAO90749">
    <property type="protein sequence ID" value="AAO90749"/>
    <property type="gene ID" value="CBU_1240"/>
</dbReference>
<dbReference type="GeneID" id="1209145"/>
<dbReference type="KEGG" id="cbu:CBU_1240"/>
<dbReference type="PATRIC" id="fig|227377.7.peg.1231"/>
<dbReference type="eggNOG" id="COG0533">
    <property type="taxonomic scope" value="Bacteria"/>
</dbReference>
<dbReference type="HOGENOM" id="CLU_023208_0_0_6"/>
<dbReference type="OrthoDB" id="9806197at2"/>
<dbReference type="Proteomes" id="UP000002671">
    <property type="component" value="Chromosome"/>
</dbReference>
<dbReference type="GO" id="GO:0005737">
    <property type="term" value="C:cytoplasm"/>
    <property type="evidence" value="ECO:0007669"/>
    <property type="project" value="UniProtKB-SubCell"/>
</dbReference>
<dbReference type="GO" id="GO:0005506">
    <property type="term" value="F:iron ion binding"/>
    <property type="evidence" value="ECO:0007669"/>
    <property type="project" value="UniProtKB-UniRule"/>
</dbReference>
<dbReference type="GO" id="GO:0061711">
    <property type="term" value="F:N(6)-L-threonylcarbamoyladenine synthase activity"/>
    <property type="evidence" value="ECO:0007669"/>
    <property type="project" value="UniProtKB-EC"/>
</dbReference>
<dbReference type="GO" id="GO:0002949">
    <property type="term" value="P:tRNA threonylcarbamoyladenosine modification"/>
    <property type="evidence" value="ECO:0007669"/>
    <property type="project" value="UniProtKB-UniRule"/>
</dbReference>
<dbReference type="CDD" id="cd24133">
    <property type="entry name" value="ASKHA_NBD_TsaD_bac"/>
    <property type="match status" value="1"/>
</dbReference>
<dbReference type="FunFam" id="3.30.420.40:FF:000031">
    <property type="entry name" value="tRNA N6-adenosine threonylcarbamoyltransferase"/>
    <property type="match status" value="1"/>
</dbReference>
<dbReference type="Gene3D" id="3.30.420.40">
    <property type="match status" value="2"/>
</dbReference>
<dbReference type="HAMAP" id="MF_01445">
    <property type="entry name" value="TsaD"/>
    <property type="match status" value="1"/>
</dbReference>
<dbReference type="InterPro" id="IPR043129">
    <property type="entry name" value="ATPase_NBD"/>
</dbReference>
<dbReference type="InterPro" id="IPR000905">
    <property type="entry name" value="Gcp-like_dom"/>
</dbReference>
<dbReference type="InterPro" id="IPR017861">
    <property type="entry name" value="KAE1/TsaD"/>
</dbReference>
<dbReference type="InterPro" id="IPR017860">
    <property type="entry name" value="Peptidase_M22_CS"/>
</dbReference>
<dbReference type="InterPro" id="IPR022450">
    <property type="entry name" value="TsaD"/>
</dbReference>
<dbReference type="NCBIfam" id="TIGR00329">
    <property type="entry name" value="gcp_kae1"/>
    <property type="match status" value="1"/>
</dbReference>
<dbReference type="NCBIfam" id="TIGR03723">
    <property type="entry name" value="T6A_TsaD_YgjD"/>
    <property type="match status" value="1"/>
</dbReference>
<dbReference type="PANTHER" id="PTHR11735">
    <property type="entry name" value="TRNA N6-ADENOSINE THREONYLCARBAMOYLTRANSFERASE"/>
    <property type="match status" value="1"/>
</dbReference>
<dbReference type="PANTHER" id="PTHR11735:SF6">
    <property type="entry name" value="TRNA N6-ADENOSINE THREONYLCARBAMOYLTRANSFERASE, MITOCHONDRIAL"/>
    <property type="match status" value="1"/>
</dbReference>
<dbReference type="Pfam" id="PF00814">
    <property type="entry name" value="TsaD"/>
    <property type="match status" value="1"/>
</dbReference>
<dbReference type="PRINTS" id="PR00789">
    <property type="entry name" value="OSIALOPTASE"/>
</dbReference>
<dbReference type="SUPFAM" id="SSF53067">
    <property type="entry name" value="Actin-like ATPase domain"/>
    <property type="match status" value="2"/>
</dbReference>
<dbReference type="PROSITE" id="PS01016">
    <property type="entry name" value="GLYCOPROTEASE"/>
    <property type="match status" value="1"/>
</dbReference>
<keyword id="KW-0012">Acyltransferase</keyword>
<keyword id="KW-0963">Cytoplasm</keyword>
<keyword id="KW-0408">Iron</keyword>
<keyword id="KW-0479">Metal-binding</keyword>
<keyword id="KW-1185">Reference proteome</keyword>
<keyword id="KW-0808">Transferase</keyword>
<keyword id="KW-0819">tRNA processing</keyword>
<evidence type="ECO:0000255" key="1">
    <source>
        <dbReference type="HAMAP-Rule" id="MF_01445"/>
    </source>
</evidence>
<name>TSAD_COXBU</name>
<organism>
    <name type="scientific">Coxiella burnetii (strain RSA 493 / Nine Mile phase I)</name>
    <dbReference type="NCBI Taxonomy" id="227377"/>
    <lineage>
        <taxon>Bacteria</taxon>
        <taxon>Pseudomonadati</taxon>
        <taxon>Pseudomonadota</taxon>
        <taxon>Gammaproteobacteria</taxon>
        <taxon>Legionellales</taxon>
        <taxon>Coxiellaceae</taxon>
        <taxon>Coxiella</taxon>
    </lineage>
</organism>
<gene>
    <name evidence="1" type="primary">tsaD</name>
    <name type="synonym">gcp</name>
    <name type="ordered locus">CBU_1240</name>
</gene>